<proteinExistence type="inferred from homology"/>
<keyword id="KW-1185">Reference proteome</keyword>
<keyword id="KW-0687">Ribonucleoprotein</keyword>
<keyword id="KW-0689">Ribosomal protein</keyword>
<reference key="1">
    <citation type="journal article" date="2003" name="Proc. Natl. Acad. Sci. U.S.A.">
        <title>Complete genome sequence of Lactobacillus plantarum WCFS1.</title>
        <authorList>
            <person name="Kleerebezem M."/>
            <person name="Boekhorst J."/>
            <person name="van Kranenburg R."/>
            <person name="Molenaar D."/>
            <person name="Kuipers O.P."/>
            <person name="Leer R."/>
            <person name="Tarchini R."/>
            <person name="Peters S.A."/>
            <person name="Sandbrink H.M."/>
            <person name="Fiers M.W.E.J."/>
            <person name="Stiekema W."/>
            <person name="Klein Lankhorst R.M."/>
            <person name="Bron P.A."/>
            <person name="Hoffer S.M."/>
            <person name="Nierop Groot M.N."/>
            <person name="Kerkhoven R."/>
            <person name="De Vries M."/>
            <person name="Ursing B."/>
            <person name="De Vos W.M."/>
            <person name="Siezen R.J."/>
        </authorList>
    </citation>
    <scope>NUCLEOTIDE SEQUENCE [LARGE SCALE GENOMIC DNA]</scope>
    <source>
        <strain>ATCC BAA-793 / NCIMB 8826 / WCFS1</strain>
    </source>
</reference>
<reference key="2">
    <citation type="journal article" date="2012" name="J. Bacteriol.">
        <title>Complete resequencing and reannotation of the Lactobacillus plantarum WCFS1 genome.</title>
        <authorList>
            <person name="Siezen R.J."/>
            <person name="Francke C."/>
            <person name="Renckens B."/>
            <person name="Boekhorst J."/>
            <person name="Wels M."/>
            <person name="Kleerebezem M."/>
            <person name="van Hijum S.A."/>
        </authorList>
    </citation>
    <scope>NUCLEOTIDE SEQUENCE [LARGE SCALE GENOMIC DNA]</scope>
    <scope>GENOME REANNOTATION</scope>
    <source>
        <strain>ATCC BAA-793 / NCIMB 8826 / WCFS1</strain>
    </source>
</reference>
<name>RL36_LACPL</name>
<gene>
    <name evidence="1" type="primary">rpmJ</name>
    <name type="ordered locus">lp_1059.1</name>
    <name type="ORF">lp_1059A</name>
</gene>
<evidence type="ECO:0000255" key="1">
    <source>
        <dbReference type="HAMAP-Rule" id="MF_00251"/>
    </source>
</evidence>
<evidence type="ECO:0000305" key="2"/>
<dbReference type="EMBL" id="AL935263">
    <property type="protein sequence ID" value="CCC78467.1"/>
    <property type="molecule type" value="Genomic_DNA"/>
</dbReference>
<dbReference type="RefSeq" id="WP_003638083.1">
    <property type="nucleotide sequence ID" value="NC_004567.2"/>
</dbReference>
<dbReference type="RefSeq" id="YP_004888981.1">
    <property type="nucleotide sequence ID" value="NC_004567.2"/>
</dbReference>
<dbReference type="SMR" id="Q88XW3"/>
<dbReference type="STRING" id="220668.lp_1059a"/>
<dbReference type="EnsemblBacteria" id="CCC78467">
    <property type="protein sequence ID" value="CCC78467"/>
    <property type="gene ID" value="lp_1059a"/>
</dbReference>
<dbReference type="GeneID" id="89668570"/>
<dbReference type="KEGG" id="lpl:lp_1059a"/>
<dbReference type="PATRIC" id="fig|220668.9.peg.894"/>
<dbReference type="eggNOG" id="COG0257">
    <property type="taxonomic scope" value="Bacteria"/>
</dbReference>
<dbReference type="HOGENOM" id="CLU_135723_6_2_9"/>
<dbReference type="OrthoDB" id="9802520at2"/>
<dbReference type="PhylomeDB" id="Q88XW3"/>
<dbReference type="Proteomes" id="UP000000432">
    <property type="component" value="Chromosome"/>
</dbReference>
<dbReference type="GO" id="GO:0005737">
    <property type="term" value="C:cytoplasm"/>
    <property type="evidence" value="ECO:0007669"/>
    <property type="project" value="UniProtKB-ARBA"/>
</dbReference>
<dbReference type="GO" id="GO:1990904">
    <property type="term" value="C:ribonucleoprotein complex"/>
    <property type="evidence" value="ECO:0007669"/>
    <property type="project" value="UniProtKB-KW"/>
</dbReference>
<dbReference type="GO" id="GO:0005840">
    <property type="term" value="C:ribosome"/>
    <property type="evidence" value="ECO:0007669"/>
    <property type="project" value="UniProtKB-KW"/>
</dbReference>
<dbReference type="GO" id="GO:0003735">
    <property type="term" value="F:structural constituent of ribosome"/>
    <property type="evidence" value="ECO:0007669"/>
    <property type="project" value="InterPro"/>
</dbReference>
<dbReference type="GO" id="GO:0006412">
    <property type="term" value="P:translation"/>
    <property type="evidence" value="ECO:0007669"/>
    <property type="project" value="UniProtKB-UniRule"/>
</dbReference>
<dbReference type="HAMAP" id="MF_00251">
    <property type="entry name" value="Ribosomal_bL36"/>
    <property type="match status" value="1"/>
</dbReference>
<dbReference type="InterPro" id="IPR000473">
    <property type="entry name" value="Ribosomal_bL36"/>
</dbReference>
<dbReference type="InterPro" id="IPR035977">
    <property type="entry name" value="Ribosomal_bL36_sp"/>
</dbReference>
<dbReference type="NCBIfam" id="TIGR01022">
    <property type="entry name" value="rpmJ_bact"/>
    <property type="match status" value="1"/>
</dbReference>
<dbReference type="PANTHER" id="PTHR42888">
    <property type="entry name" value="50S RIBOSOMAL PROTEIN L36, CHLOROPLASTIC"/>
    <property type="match status" value="1"/>
</dbReference>
<dbReference type="PANTHER" id="PTHR42888:SF1">
    <property type="entry name" value="LARGE RIBOSOMAL SUBUNIT PROTEIN BL36C"/>
    <property type="match status" value="1"/>
</dbReference>
<dbReference type="Pfam" id="PF00444">
    <property type="entry name" value="Ribosomal_L36"/>
    <property type="match status" value="1"/>
</dbReference>
<dbReference type="SUPFAM" id="SSF57840">
    <property type="entry name" value="Ribosomal protein L36"/>
    <property type="match status" value="1"/>
</dbReference>
<dbReference type="PROSITE" id="PS00828">
    <property type="entry name" value="RIBOSOMAL_L36"/>
    <property type="match status" value="1"/>
</dbReference>
<comment type="similarity">
    <text evidence="1">Belongs to the bacterial ribosomal protein bL36 family.</text>
</comment>
<protein>
    <recommendedName>
        <fullName evidence="1">Large ribosomal subunit protein bL36</fullName>
    </recommendedName>
    <alternativeName>
        <fullName evidence="2">50S ribosomal protein L36</fullName>
    </alternativeName>
</protein>
<sequence>MKVRPSVKPMCEHCKVIRRKGRVMIICSANPKHKQRQGK</sequence>
<organism>
    <name type="scientific">Lactiplantibacillus plantarum (strain ATCC BAA-793 / NCIMB 8826 / WCFS1)</name>
    <name type="common">Lactobacillus plantarum</name>
    <dbReference type="NCBI Taxonomy" id="220668"/>
    <lineage>
        <taxon>Bacteria</taxon>
        <taxon>Bacillati</taxon>
        <taxon>Bacillota</taxon>
        <taxon>Bacilli</taxon>
        <taxon>Lactobacillales</taxon>
        <taxon>Lactobacillaceae</taxon>
        <taxon>Lactiplantibacillus</taxon>
    </lineage>
</organism>
<feature type="chain" id="PRO_0000126199" description="Large ribosomal subunit protein bL36">
    <location>
        <begin position="1"/>
        <end position="39"/>
    </location>
</feature>
<accession>Q88XW3</accession>
<accession>F9UMM8</accession>